<reference key="1">
    <citation type="journal article" date="1992" name="Eur. J. Biochem.">
        <title>The primary structure of the antenna polypeptides of Ectothiorhodospira halochloris and Ectothiorhodospira halophila. Four core-type antenna polypeptides in E. halochloris and E. halophila.</title>
        <authorList>
            <person name="Wagner-Huber R."/>
            <person name="Brunisholz R.A."/>
            <person name="Bissig I."/>
            <person name="Frank G."/>
            <person name="Suter F."/>
            <person name="Zuber H."/>
        </authorList>
    </citation>
    <scope>PROTEIN SEQUENCE</scope>
    <source>
        <strain>ATCC 25092 / 7050 / DSM 137 / LMG 4304 / NCIB 11761</strain>
    </source>
</reference>
<reference key="2">
    <citation type="book" date="1987" name="Progress in photosynthesis research">
        <editorList>
            <person name="Biggins J."/>
        </editorList>
        <authorList>
            <person name="Brunisholz R.A."/>
            <person name="Bissig I."/>
            <person name="Niederer E."/>
            <person name="Suter F."/>
            <person name="Zuber H."/>
        </authorList>
    </citation>
    <scope>PROTEIN SEQUENCE OF 1-28 AND 46-48</scope>
    <source>
        <strain>ATCC 25092 / 7050 / DSM 137 / LMG 4304 / NCIB 11761</strain>
    </source>
</reference>
<sequence length="48" mass="5278">ADDVKGLTGLTAAESEELHKHVIDGTRVFFVIAIFAHVLAFAFSPWLH</sequence>
<name>LHB4_RHOAC</name>
<dbReference type="SMR" id="P35097"/>
<dbReference type="GO" id="GO:0005886">
    <property type="term" value="C:plasma membrane"/>
    <property type="evidence" value="ECO:0007669"/>
    <property type="project" value="UniProtKB-SubCell"/>
</dbReference>
<dbReference type="GO" id="GO:0030077">
    <property type="term" value="C:plasma membrane light-harvesting complex"/>
    <property type="evidence" value="ECO:0007669"/>
    <property type="project" value="InterPro"/>
</dbReference>
<dbReference type="GO" id="GO:0042314">
    <property type="term" value="F:bacteriochlorophyll binding"/>
    <property type="evidence" value="ECO:0007669"/>
    <property type="project" value="UniProtKB-KW"/>
</dbReference>
<dbReference type="GO" id="GO:0045156">
    <property type="term" value="F:electron transporter, transferring electrons within the cyclic electron transport pathway of photosynthesis activity"/>
    <property type="evidence" value="ECO:0007669"/>
    <property type="project" value="InterPro"/>
</dbReference>
<dbReference type="GO" id="GO:0046872">
    <property type="term" value="F:metal ion binding"/>
    <property type="evidence" value="ECO:0007669"/>
    <property type="project" value="UniProtKB-KW"/>
</dbReference>
<dbReference type="GO" id="GO:0019684">
    <property type="term" value="P:photosynthesis, light reaction"/>
    <property type="evidence" value="ECO:0007669"/>
    <property type="project" value="InterPro"/>
</dbReference>
<dbReference type="Gene3D" id="1.20.5.250">
    <property type="match status" value="1"/>
</dbReference>
<dbReference type="InterPro" id="IPR000066">
    <property type="entry name" value="Antenna_a/b"/>
</dbReference>
<dbReference type="InterPro" id="IPR023623">
    <property type="entry name" value="Antenna_beta_CS"/>
</dbReference>
<dbReference type="InterPro" id="IPR023624">
    <property type="entry name" value="Antenna_beta_dom_sf"/>
</dbReference>
<dbReference type="InterPro" id="IPR002362">
    <property type="entry name" value="LHB-1/5"/>
</dbReference>
<dbReference type="InterPro" id="IPR035889">
    <property type="entry name" value="Light-harvesting_complex"/>
</dbReference>
<dbReference type="NCBIfam" id="NF040862">
    <property type="entry name" value="pufB_517_ASD"/>
    <property type="match status" value="1"/>
</dbReference>
<dbReference type="Pfam" id="PF00556">
    <property type="entry name" value="LHC"/>
    <property type="match status" value="1"/>
</dbReference>
<dbReference type="PIRSF" id="PIRSF002900">
    <property type="entry name" value="Antenna_beta"/>
    <property type="match status" value="1"/>
</dbReference>
<dbReference type="PRINTS" id="PR00674">
    <property type="entry name" value="LIGHTHARVSTB"/>
</dbReference>
<dbReference type="SUPFAM" id="SSF56918">
    <property type="entry name" value="Light-harvesting complex subunits"/>
    <property type="match status" value="1"/>
</dbReference>
<dbReference type="PROSITE" id="PS00969">
    <property type="entry name" value="ANTENNA_COMP_BETA"/>
    <property type="match status" value="1"/>
</dbReference>
<comment type="function">
    <text>Antenna complexes are light-harvesting systems, which transfer the excitation energy to the reaction centers.</text>
</comment>
<comment type="subunit">
    <text>The core complex is formed by different alpha and beta chains, binding bacteriochlorophyll molecules, and arranged most probably in tetrameric structures disposed around the reaction center. The non-pigmented gamma chains may constitute additional components.</text>
</comment>
<comment type="subcellular location">
    <subcellularLocation>
        <location>Cell inner membrane</location>
        <topology>Single-pass type II membrane protein</topology>
    </subcellularLocation>
</comment>
<comment type="similarity">
    <text evidence="2">Belongs to the antenna complex beta subunit family.</text>
</comment>
<keyword id="KW-0042">Antenna complex</keyword>
<keyword id="KW-0076">Bacteriochlorophyll</keyword>
<keyword id="KW-0997">Cell inner membrane</keyword>
<keyword id="KW-1003">Cell membrane</keyword>
<keyword id="KW-0148">Chlorophyll</keyword>
<keyword id="KW-0157">Chromophore</keyword>
<keyword id="KW-0903">Direct protein sequencing</keyword>
<keyword id="KW-0437">Light-harvesting polypeptide</keyword>
<keyword id="KW-0460">Magnesium</keyword>
<keyword id="KW-0472">Membrane</keyword>
<keyword id="KW-0479">Metal-binding</keyword>
<keyword id="KW-0812">Transmembrane</keyword>
<keyword id="KW-1133">Transmembrane helix</keyword>
<evidence type="ECO:0000255" key="1"/>
<evidence type="ECO:0000305" key="2"/>
<protein>
    <recommendedName>
        <fullName>Light-harvesting protein B-800-850 beta chain</fullName>
    </recommendedName>
    <alternativeName>
        <fullName>Antenna pigment protein beta chain</fullName>
    </alternativeName>
</protein>
<organism>
    <name type="scientific">Rhodoblastus acidophilus</name>
    <name type="common">Rhodopseudomonas acidophila</name>
    <dbReference type="NCBI Taxonomy" id="1074"/>
    <lineage>
        <taxon>Bacteria</taxon>
        <taxon>Pseudomonadati</taxon>
        <taxon>Pseudomonadota</taxon>
        <taxon>Alphaproteobacteria</taxon>
        <taxon>Hyphomicrobiales</taxon>
        <taxon>Rhodoblastaceae</taxon>
        <taxon>Rhodoblastus</taxon>
    </lineage>
</organism>
<accession>P35097</accession>
<feature type="chain" id="PRO_0000099818" description="Light-harvesting protein B-800-850 beta chain">
    <location>
        <begin position="1"/>
        <end position="48"/>
    </location>
</feature>
<feature type="topological domain" description="Cytoplasmic" evidence="1">
    <location>
        <begin position="1"/>
        <end position="20"/>
    </location>
</feature>
<feature type="transmembrane region" description="Helical" evidence="1">
    <location>
        <begin position="21"/>
        <end position="43"/>
    </location>
</feature>
<feature type="topological domain" description="Periplasmic" evidence="1">
    <location>
        <begin position="44"/>
        <end position="48"/>
    </location>
</feature>
<feature type="binding site" description="axial binding residue" evidence="1">
    <location>
        <position position="19"/>
    </location>
    <ligand>
        <name>a bacteriochlorophyll</name>
        <dbReference type="ChEBI" id="CHEBI:38201"/>
    </ligand>
    <ligandPart>
        <name>Mg</name>
        <dbReference type="ChEBI" id="CHEBI:25107"/>
    </ligandPart>
</feature>
<feature type="binding site" description="axial binding residue" evidence="1">
    <location>
        <position position="37"/>
    </location>
    <ligand>
        <name>a bacteriochlorophyll</name>
        <dbReference type="ChEBI" id="CHEBI:38201"/>
    </ligand>
    <ligandPart>
        <name>Mg</name>
        <dbReference type="ChEBI" id="CHEBI:25107"/>
    </ligandPart>
</feature>
<proteinExistence type="evidence at protein level"/>